<evidence type="ECO:0000255" key="1">
    <source>
        <dbReference type="HAMAP-Rule" id="MF_01357"/>
    </source>
</evidence>
<keyword id="KW-0150">Chloroplast</keyword>
<keyword id="KW-0472">Membrane</keyword>
<keyword id="KW-0520">NAD</keyword>
<keyword id="KW-0521">NADP</keyword>
<keyword id="KW-0934">Plastid</keyword>
<keyword id="KW-0618">Plastoquinone</keyword>
<keyword id="KW-0874">Quinone</keyword>
<keyword id="KW-0793">Thylakoid</keyword>
<keyword id="KW-1278">Translocase</keyword>
<keyword id="KW-0813">Transport</keyword>
<geneLocation type="chloroplast"/>
<protein>
    <recommendedName>
        <fullName evidence="1">NAD(P)H-quinone oxidoreductase subunit J, chloroplastic</fullName>
        <ecNumber evidence="1">7.1.1.-</ecNumber>
    </recommendedName>
    <alternativeName>
        <fullName>NAD(P)H dehydrogenase subunit J</fullName>
    </alternativeName>
    <alternativeName>
        <fullName evidence="1">NADH-plastoquinone oxidoreductase subunit J</fullName>
    </alternativeName>
</protein>
<name>NDHJ_CITSI</name>
<dbReference type="EC" id="7.1.1.-" evidence="1"/>
<dbReference type="EMBL" id="DQ864733">
    <property type="protein sequence ID" value="ABI49023.1"/>
    <property type="molecule type" value="Genomic_DNA"/>
</dbReference>
<dbReference type="RefSeq" id="YP_740478.1">
    <property type="nucleotide sequence ID" value="NC_008334.1"/>
</dbReference>
<dbReference type="SMR" id="Q09MH5"/>
<dbReference type="GeneID" id="4271139"/>
<dbReference type="KEGG" id="cit:4271139"/>
<dbReference type="OrthoDB" id="781770at71240"/>
<dbReference type="GO" id="GO:0009535">
    <property type="term" value="C:chloroplast thylakoid membrane"/>
    <property type="evidence" value="ECO:0007669"/>
    <property type="project" value="UniProtKB-SubCell"/>
</dbReference>
<dbReference type="GO" id="GO:0008137">
    <property type="term" value="F:NADH dehydrogenase (ubiquinone) activity"/>
    <property type="evidence" value="ECO:0007669"/>
    <property type="project" value="InterPro"/>
</dbReference>
<dbReference type="GO" id="GO:0048038">
    <property type="term" value="F:quinone binding"/>
    <property type="evidence" value="ECO:0007669"/>
    <property type="project" value="UniProtKB-KW"/>
</dbReference>
<dbReference type="GO" id="GO:0019684">
    <property type="term" value="P:photosynthesis, light reaction"/>
    <property type="evidence" value="ECO:0007669"/>
    <property type="project" value="UniProtKB-UniRule"/>
</dbReference>
<dbReference type="FunFam" id="3.30.460.80:FF:000004">
    <property type="entry name" value="NAD(P)H-quinone oxidoreductase subunit J, chloroplastic"/>
    <property type="match status" value="1"/>
</dbReference>
<dbReference type="Gene3D" id="3.30.460.80">
    <property type="entry name" value="NADH:ubiquinone oxidoreductase, 30kDa subunit"/>
    <property type="match status" value="1"/>
</dbReference>
<dbReference type="HAMAP" id="MF_01357">
    <property type="entry name" value="NDH1_NuoC"/>
    <property type="match status" value="1"/>
</dbReference>
<dbReference type="InterPro" id="IPR010218">
    <property type="entry name" value="NADH_DH_suC"/>
</dbReference>
<dbReference type="InterPro" id="IPR037232">
    <property type="entry name" value="NADH_quin_OxRdtase_su_C/D-like"/>
</dbReference>
<dbReference type="InterPro" id="IPR001268">
    <property type="entry name" value="NADH_UbQ_OxRdtase_30kDa_su"/>
</dbReference>
<dbReference type="InterPro" id="IPR020396">
    <property type="entry name" value="NADH_UbQ_OxRdtase_CS"/>
</dbReference>
<dbReference type="NCBIfam" id="NF009141">
    <property type="entry name" value="PRK12494.1"/>
    <property type="match status" value="1"/>
</dbReference>
<dbReference type="PANTHER" id="PTHR10884:SF14">
    <property type="entry name" value="NADH DEHYDROGENASE [UBIQUINONE] IRON-SULFUR PROTEIN 3, MITOCHONDRIAL"/>
    <property type="match status" value="1"/>
</dbReference>
<dbReference type="PANTHER" id="PTHR10884">
    <property type="entry name" value="NADH DEHYDROGENASE UBIQUINONE IRON-SULFUR PROTEIN 3"/>
    <property type="match status" value="1"/>
</dbReference>
<dbReference type="Pfam" id="PF00329">
    <property type="entry name" value="Complex1_30kDa"/>
    <property type="match status" value="1"/>
</dbReference>
<dbReference type="SUPFAM" id="SSF143243">
    <property type="entry name" value="Nqo5-like"/>
    <property type="match status" value="1"/>
</dbReference>
<dbReference type="PROSITE" id="PS00542">
    <property type="entry name" value="COMPLEX1_30K"/>
    <property type="match status" value="1"/>
</dbReference>
<sequence length="158" mass="18531">MQGRLSAWLVKHGLVHRSLGFDYQGIETLQIKPEDWHSVAVILYIYGYNYLRSQCAYDVAPGGLLASVYHLTRIEYGVDQPEEVCIKVFAPRSNPKIPSVFWVWKSANFQERESYDMLGILYDNHPRLKRILMPESWIGWPLRKDYIAPNFYEIQDAY</sequence>
<organism>
    <name type="scientific">Citrus sinensis</name>
    <name type="common">Sweet orange</name>
    <name type="synonym">Citrus aurantium var. sinensis</name>
    <dbReference type="NCBI Taxonomy" id="2711"/>
    <lineage>
        <taxon>Eukaryota</taxon>
        <taxon>Viridiplantae</taxon>
        <taxon>Streptophyta</taxon>
        <taxon>Embryophyta</taxon>
        <taxon>Tracheophyta</taxon>
        <taxon>Spermatophyta</taxon>
        <taxon>Magnoliopsida</taxon>
        <taxon>eudicotyledons</taxon>
        <taxon>Gunneridae</taxon>
        <taxon>Pentapetalae</taxon>
        <taxon>rosids</taxon>
        <taxon>malvids</taxon>
        <taxon>Sapindales</taxon>
        <taxon>Rutaceae</taxon>
        <taxon>Aurantioideae</taxon>
        <taxon>Citrus</taxon>
    </lineage>
</organism>
<feature type="chain" id="PRO_0000358255" description="NAD(P)H-quinone oxidoreductase subunit J, chloroplastic">
    <location>
        <begin position="1"/>
        <end position="158"/>
    </location>
</feature>
<accession>Q09MH5</accession>
<comment type="function">
    <text evidence="1">NDH shuttles electrons from NAD(P)H:plastoquinone, via FMN and iron-sulfur (Fe-S) centers, to quinones in the photosynthetic chain and possibly in a chloroplast respiratory chain. The immediate electron acceptor for the enzyme in this species is believed to be plastoquinone. Couples the redox reaction to proton translocation, and thus conserves the redox energy in a proton gradient.</text>
</comment>
<comment type="catalytic activity">
    <reaction evidence="1">
        <text>a plastoquinone + NADH + (n+1) H(+)(in) = a plastoquinol + NAD(+) + n H(+)(out)</text>
        <dbReference type="Rhea" id="RHEA:42608"/>
        <dbReference type="Rhea" id="RHEA-COMP:9561"/>
        <dbReference type="Rhea" id="RHEA-COMP:9562"/>
        <dbReference type="ChEBI" id="CHEBI:15378"/>
        <dbReference type="ChEBI" id="CHEBI:17757"/>
        <dbReference type="ChEBI" id="CHEBI:57540"/>
        <dbReference type="ChEBI" id="CHEBI:57945"/>
        <dbReference type="ChEBI" id="CHEBI:62192"/>
    </reaction>
</comment>
<comment type="catalytic activity">
    <reaction evidence="1">
        <text>a plastoquinone + NADPH + (n+1) H(+)(in) = a plastoquinol + NADP(+) + n H(+)(out)</text>
        <dbReference type="Rhea" id="RHEA:42612"/>
        <dbReference type="Rhea" id="RHEA-COMP:9561"/>
        <dbReference type="Rhea" id="RHEA-COMP:9562"/>
        <dbReference type="ChEBI" id="CHEBI:15378"/>
        <dbReference type="ChEBI" id="CHEBI:17757"/>
        <dbReference type="ChEBI" id="CHEBI:57783"/>
        <dbReference type="ChEBI" id="CHEBI:58349"/>
        <dbReference type="ChEBI" id="CHEBI:62192"/>
    </reaction>
</comment>
<comment type="subunit">
    <text evidence="1">NDH is composed of at least 16 different subunits, 5 of which are encoded in the nucleus.</text>
</comment>
<comment type="subcellular location">
    <subcellularLocation>
        <location evidence="1">Plastid</location>
        <location evidence="1">Chloroplast thylakoid membrane</location>
        <topology evidence="1">Peripheral membrane protein</topology>
        <orientation evidence="1">Stromal side</orientation>
    </subcellularLocation>
</comment>
<comment type="similarity">
    <text evidence="1">Belongs to the complex I 30 kDa subunit family.</text>
</comment>
<proteinExistence type="inferred from homology"/>
<gene>
    <name evidence="1" type="primary">ndhJ</name>
</gene>
<reference key="1">
    <citation type="journal article" date="2006" name="BMC Plant Biol.">
        <title>The complete chloroplast genome sequence of Citrus sinensis (L.) Osbeck var 'Ridge Pineapple': organization and phylogenetic relationships to other angiosperms.</title>
        <authorList>
            <person name="Bausher M.G."/>
            <person name="Singh N.D."/>
            <person name="Lee S.-B."/>
            <person name="Jansen R.K."/>
            <person name="Daniell H."/>
        </authorList>
    </citation>
    <scope>NUCLEOTIDE SEQUENCE [LARGE SCALE GENOMIC DNA]</scope>
    <source>
        <strain>cv. Osbeck var. Ridge Pineapple</strain>
    </source>
</reference>